<feature type="chain" id="PRO_0000297411" description="3-methyl-2-oxobutanoate hydroxymethyltransferase">
    <location>
        <begin position="1"/>
        <end position="271"/>
    </location>
</feature>
<feature type="active site" description="Proton acceptor" evidence="1">
    <location>
        <position position="186"/>
    </location>
</feature>
<feature type="binding site" evidence="1">
    <location>
        <begin position="51"/>
        <end position="52"/>
    </location>
    <ligand>
        <name>3-methyl-2-oxobutanoate</name>
        <dbReference type="ChEBI" id="CHEBI:11851"/>
    </ligand>
</feature>
<feature type="binding site" evidence="1">
    <location>
        <position position="51"/>
    </location>
    <ligand>
        <name>Mg(2+)</name>
        <dbReference type="ChEBI" id="CHEBI:18420"/>
    </ligand>
</feature>
<feature type="binding site" evidence="1">
    <location>
        <position position="90"/>
    </location>
    <ligand>
        <name>3-methyl-2-oxobutanoate</name>
        <dbReference type="ChEBI" id="CHEBI:11851"/>
    </ligand>
</feature>
<feature type="binding site" evidence="1">
    <location>
        <position position="90"/>
    </location>
    <ligand>
        <name>Mg(2+)</name>
        <dbReference type="ChEBI" id="CHEBI:18420"/>
    </ligand>
</feature>
<feature type="binding site" evidence="1">
    <location>
        <position position="118"/>
    </location>
    <ligand>
        <name>3-methyl-2-oxobutanoate</name>
        <dbReference type="ChEBI" id="CHEBI:11851"/>
    </ligand>
</feature>
<feature type="binding site" evidence="1">
    <location>
        <position position="120"/>
    </location>
    <ligand>
        <name>Mg(2+)</name>
        <dbReference type="ChEBI" id="CHEBI:18420"/>
    </ligand>
</feature>
<organism>
    <name type="scientific">Xanthomonas euvesicatoria pv. vesicatoria (strain 85-10)</name>
    <name type="common">Xanthomonas campestris pv. vesicatoria</name>
    <dbReference type="NCBI Taxonomy" id="316273"/>
    <lineage>
        <taxon>Bacteria</taxon>
        <taxon>Pseudomonadati</taxon>
        <taxon>Pseudomonadota</taxon>
        <taxon>Gammaproteobacteria</taxon>
        <taxon>Lysobacterales</taxon>
        <taxon>Lysobacteraceae</taxon>
        <taxon>Xanthomonas</taxon>
    </lineage>
</organism>
<name>PANB_XANE5</name>
<reference key="1">
    <citation type="journal article" date="2005" name="J. Bacteriol.">
        <title>Insights into genome plasticity and pathogenicity of the plant pathogenic Bacterium Xanthomonas campestris pv. vesicatoria revealed by the complete genome sequence.</title>
        <authorList>
            <person name="Thieme F."/>
            <person name="Koebnik R."/>
            <person name="Bekel T."/>
            <person name="Berger C."/>
            <person name="Boch J."/>
            <person name="Buettner D."/>
            <person name="Caldana C."/>
            <person name="Gaigalat L."/>
            <person name="Goesmann A."/>
            <person name="Kay S."/>
            <person name="Kirchner O."/>
            <person name="Lanz C."/>
            <person name="Linke B."/>
            <person name="McHardy A.C."/>
            <person name="Meyer F."/>
            <person name="Mittenhuber G."/>
            <person name="Nies D.H."/>
            <person name="Niesbach-Kloesgen U."/>
            <person name="Patschkowski T."/>
            <person name="Rueckert C."/>
            <person name="Rupp O."/>
            <person name="Schneiker S."/>
            <person name="Schuster S.C."/>
            <person name="Vorhoelter F.J."/>
            <person name="Weber E."/>
            <person name="Puehler A."/>
            <person name="Bonas U."/>
            <person name="Bartels D."/>
            <person name="Kaiser O."/>
        </authorList>
    </citation>
    <scope>NUCLEOTIDE SEQUENCE [LARGE SCALE GENOMIC DNA]</scope>
    <source>
        <strain>85-10</strain>
    </source>
</reference>
<evidence type="ECO:0000255" key="1">
    <source>
        <dbReference type="HAMAP-Rule" id="MF_00156"/>
    </source>
</evidence>
<dbReference type="EC" id="2.1.2.11" evidence="1"/>
<dbReference type="EMBL" id="AM039952">
    <property type="protein sequence ID" value="CAJ23493.1"/>
    <property type="molecule type" value="Genomic_DNA"/>
</dbReference>
<dbReference type="RefSeq" id="WP_008571262.1">
    <property type="nucleotide sequence ID" value="NZ_CP017190.1"/>
</dbReference>
<dbReference type="SMR" id="Q3BUL6"/>
<dbReference type="STRING" id="456327.BJD11_13435"/>
<dbReference type="GeneID" id="97510160"/>
<dbReference type="KEGG" id="xcv:XCV1816"/>
<dbReference type="eggNOG" id="COG0413">
    <property type="taxonomic scope" value="Bacteria"/>
</dbReference>
<dbReference type="HOGENOM" id="CLU_036645_1_0_6"/>
<dbReference type="UniPathway" id="UPA00028">
    <property type="reaction ID" value="UER00003"/>
</dbReference>
<dbReference type="Proteomes" id="UP000007069">
    <property type="component" value="Chromosome"/>
</dbReference>
<dbReference type="GO" id="GO:0005737">
    <property type="term" value="C:cytoplasm"/>
    <property type="evidence" value="ECO:0007669"/>
    <property type="project" value="UniProtKB-SubCell"/>
</dbReference>
<dbReference type="GO" id="GO:0003864">
    <property type="term" value="F:3-methyl-2-oxobutanoate hydroxymethyltransferase activity"/>
    <property type="evidence" value="ECO:0007669"/>
    <property type="project" value="UniProtKB-UniRule"/>
</dbReference>
<dbReference type="GO" id="GO:0000287">
    <property type="term" value="F:magnesium ion binding"/>
    <property type="evidence" value="ECO:0007669"/>
    <property type="project" value="TreeGrafter"/>
</dbReference>
<dbReference type="GO" id="GO:0015940">
    <property type="term" value="P:pantothenate biosynthetic process"/>
    <property type="evidence" value="ECO:0007669"/>
    <property type="project" value="UniProtKB-UniRule"/>
</dbReference>
<dbReference type="CDD" id="cd06557">
    <property type="entry name" value="KPHMT-like"/>
    <property type="match status" value="1"/>
</dbReference>
<dbReference type="FunFam" id="3.20.20.60:FF:000032">
    <property type="entry name" value="3-methyl-2-oxobutanoate hydroxymethyltransferase"/>
    <property type="match status" value="1"/>
</dbReference>
<dbReference type="Gene3D" id="3.20.20.60">
    <property type="entry name" value="Phosphoenolpyruvate-binding domains"/>
    <property type="match status" value="1"/>
</dbReference>
<dbReference type="HAMAP" id="MF_00156">
    <property type="entry name" value="PanB"/>
    <property type="match status" value="1"/>
</dbReference>
<dbReference type="InterPro" id="IPR003700">
    <property type="entry name" value="Pantoate_hydroxy_MeTrfase"/>
</dbReference>
<dbReference type="InterPro" id="IPR015813">
    <property type="entry name" value="Pyrv/PenolPyrv_kinase-like_dom"/>
</dbReference>
<dbReference type="InterPro" id="IPR040442">
    <property type="entry name" value="Pyrv_kinase-like_dom_sf"/>
</dbReference>
<dbReference type="NCBIfam" id="TIGR00222">
    <property type="entry name" value="panB"/>
    <property type="match status" value="1"/>
</dbReference>
<dbReference type="NCBIfam" id="NF001452">
    <property type="entry name" value="PRK00311.1"/>
    <property type="match status" value="1"/>
</dbReference>
<dbReference type="PANTHER" id="PTHR20881">
    <property type="entry name" value="3-METHYL-2-OXOBUTANOATE HYDROXYMETHYLTRANSFERASE"/>
    <property type="match status" value="1"/>
</dbReference>
<dbReference type="PANTHER" id="PTHR20881:SF0">
    <property type="entry name" value="3-METHYL-2-OXOBUTANOATE HYDROXYMETHYLTRANSFERASE"/>
    <property type="match status" value="1"/>
</dbReference>
<dbReference type="Pfam" id="PF02548">
    <property type="entry name" value="Pantoate_transf"/>
    <property type="match status" value="1"/>
</dbReference>
<dbReference type="PIRSF" id="PIRSF000388">
    <property type="entry name" value="Pantoate_hydroxy_MeTrfase"/>
    <property type="match status" value="1"/>
</dbReference>
<dbReference type="SUPFAM" id="SSF51621">
    <property type="entry name" value="Phosphoenolpyruvate/pyruvate domain"/>
    <property type="match status" value="1"/>
</dbReference>
<accession>Q3BUL6</accession>
<gene>
    <name evidence="1" type="primary">panB</name>
    <name type="ordered locus">XCV1816</name>
</gene>
<keyword id="KW-0963">Cytoplasm</keyword>
<keyword id="KW-0460">Magnesium</keyword>
<keyword id="KW-0479">Metal-binding</keyword>
<keyword id="KW-0566">Pantothenate biosynthesis</keyword>
<keyword id="KW-0808">Transferase</keyword>
<sequence>MSSHADSKPWTVPALAQAKREGRKLVMLTAYDAGFARTFDAHGVDLILVGDSLGMVVQGHDSTLPVTTADMVYHTAAVARALDRALLVADLSFQADATPERALDAATQLLQAGAEMVKIEGAGHKLEVIRYLVEREIPVCSHLGLTPQSVLRFGGYKVQGRGEAGEQLRRDAQAVVDAGASLLVLECVPTPIATQISADLSVPTIGIGAGPGCDGQVLVMHDMLGLDSGHRRPKFVKDFLAEGGSVAGAVRAYAQAVRDGSFPDAEHAYAA</sequence>
<protein>
    <recommendedName>
        <fullName evidence="1">3-methyl-2-oxobutanoate hydroxymethyltransferase</fullName>
        <ecNumber evidence="1">2.1.2.11</ecNumber>
    </recommendedName>
    <alternativeName>
        <fullName evidence="1">Ketopantoate hydroxymethyltransferase</fullName>
        <shortName evidence="1">KPHMT</shortName>
    </alternativeName>
</protein>
<proteinExistence type="inferred from homology"/>
<comment type="function">
    <text evidence="1">Catalyzes the reversible reaction in which hydroxymethyl group from 5,10-methylenetetrahydrofolate is transferred onto alpha-ketoisovalerate to form ketopantoate.</text>
</comment>
<comment type="catalytic activity">
    <reaction evidence="1">
        <text>3-methyl-2-oxobutanoate + (6R)-5,10-methylene-5,6,7,8-tetrahydrofolate + H2O = 2-dehydropantoate + (6S)-5,6,7,8-tetrahydrofolate</text>
        <dbReference type="Rhea" id="RHEA:11824"/>
        <dbReference type="ChEBI" id="CHEBI:11561"/>
        <dbReference type="ChEBI" id="CHEBI:11851"/>
        <dbReference type="ChEBI" id="CHEBI:15377"/>
        <dbReference type="ChEBI" id="CHEBI:15636"/>
        <dbReference type="ChEBI" id="CHEBI:57453"/>
        <dbReference type="EC" id="2.1.2.11"/>
    </reaction>
</comment>
<comment type="cofactor">
    <cofactor evidence="1">
        <name>Mg(2+)</name>
        <dbReference type="ChEBI" id="CHEBI:18420"/>
    </cofactor>
    <text evidence="1">Binds 1 Mg(2+) ion per subunit.</text>
</comment>
<comment type="pathway">
    <text evidence="1">Cofactor biosynthesis; (R)-pantothenate biosynthesis; (R)-pantoate from 3-methyl-2-oxobutanoate: step 1/2.</text>
</comment>
<comment type="subunit">
    <text evidence="1">Homodecamer; pentamer of dimers.</text>
</comment>
<comment type="subcellular location">
    <subcellularLocation>
        <location evidence="1">Cytoplasm</location>
    </subcellularLocation>
</comment>
<comment type="similarity">
    <text evidence="1">Belongs to the PanB family.</text>
</comment>